<sequence length="686" mass="78343">MAKVNLIESPYSLLQLKGIGPKKIEVLQQLNIHTVEDLVLYLPTRYEDNTVIDLNQAEDQSNVTIEGQVYTAPVVAFFGRNKSKLTVHLMVNNIAVKCIFFNQPYLKKKIELNQTITVKGKWNRVKQEITGNRVFFNSQGTQTQENADVQLEPVYRIKEGIKQKQIRDQIRQALNDVTIHEWLTDELREKYKLETLDFTLNTLHHPKSKEDLLRARRTYAFTELFLFELRMQWLNRLEKSSDEAIEIDYDIDQVKSFIDRLPFELTEAQKSSVNEIFRDLKAPIRMHRLLQGDVGSGKTVVAAICMYALKTAGYQSALMVPTEILAEQHAESLMALFGDSMNVALLTGSVKGKKRKILLEQLENGTIDCLIGTHALIQDDVIFHNVGLVITDEQHRFGVNQRQLLREKGAMTNVLFMTATPIPRTLAISVFGEMDVSSIKQLPKGRKPIITTWAKHEQYDKVLMQMTSELKKGRQAYVICPLIESSEHLEDVQNVVALYESLQQYYGVSRVGLLHGKLSADEKDEVMQKFSNHEINVLVSTTVVEVGVNVPNATFMMIYDADRFGLSTLHQLRGRVGRSDQQSYCVLIASPKTETGIERMTIMTQTTDGFELSERDLEMRGPGDFFGVKQSGLPDFLVANLVEDYRMLEVARDEAAELIQSGVFFENTYQHLRHFVEENLLHRSFD</sequence>
<reference key="1">
    <citation type="journal article" date="1997" name="Antimicrob. Agents Chemother.">
        <title>Cloning and sequencing of a novel gene (recG) that affects the quinolone susceptibility of Staphylococcus aureus.</title>
        <authorList>
            <person name="Niga T."/>
            <person name="Yoshida H."/>
            <person name="Hattori H."/>
            <person name="Nakamura S."/>
        </authorList>
    </citation>
    <scope>NUCLEOTIDE SEQUENCE [GENOMIC DNA]</scope>
    <scope>DISRUPTION PHENOTYPE</scope>
    <source>
        <strain>RN4220 / RCM101</strain>
    </source>
</reference>
<reference key="2">
    <citation type="book" date="2006" name="Gram positive pathogens, 2nd edition">
        <title>The Staphylococcus aureus NCTC 8325 genome.</title>
        <editorList>
            <person name="Fischetti V."/>
            <person name="Novick R."/>
            <person name="Ferretti J."/>
            <person name="Portnoy D."/>
            <person name="Rood J."/>
        </editorList>
        <authorList>
            <person name="Gillaspy A.F."/>
            <person name="Worrell V."/>
            <person name="Orvis J."/>
            <person name="Roe B.A."/>
            <person name="Dyer D.W."/>
            <person name="Iandolo J.J."/>
        </authorList>
    </citation>
    <scope>NUCLEOTIDE SEQUENCE [LARGE SCALE GENOMIC DNA]</scope>
    <source>
        <strain>NCTC 8325 / PS 47</strain>
    </source>
</reference>
<gene>
    <name evidence="6" type="primary">recG</name>
    <name type="ordered locus">SAOUHSC_01194</name>
</gene>
<evidence type="ECO:0000250" key="1">
    <source>
        <dbReference type="UniProtKB" id="P24230"/>
    </source>
</evidence>
<evidence type="ECO:0000250" key="2">
    <source>
        <dbReference type="UniProtKB" id="Q9WY48"/>
    </source>
</evidence>
<evidence type="ECO:0000255" key="3">
    <source>
        <dbReference type="PROSITE-ProRule" id="PRU00541"/>
    </source>
</evidence>
<evidence type="ECO:0000255" key="4">
    <source>
        <dbReference type="PROSITE-ProRule" id="PRU00542"/>
    </source>
</evidence>
<evidence type="ECO:0000269" key="5">
    <source>
    </source>
</evidence>
<evidence type="ECO:0000303" key="6">
    <source>
    </source>
</evidence>
<evidence type="ECO:0000305" key="7"/>
<organism>
    <name type="scientific">Staphylococcus aureus (strain NCTC 8325 / PS 47)</name>
    <dbReference type="NCBI Taxonomy" id="93061"/>
    <lineage>
        <taxon>Bacteria</taxon>
        <taxon>Bacillati</taxon>
        <taxon>Bacillota</taxon>
        <taxon>Bacilli</taxon>
        <taxon>Bacillales</taxon>
        <taxon>Staphylococcaceae</taxon>
        <taxon>Staphylococcus</taxon>
    </lineage>
</organism>
<protein>
    <recommendedName>
        <fullName>ATP-dependent DNA helicase RecG</fullName>
        <ecNumber evidence="1">5.6.2.4</ecNumber>
    </recommendedName>
    <alternativeName>
        <fullName>DNA branch migration protein RecG</fullName>
    </alternativeName>
    <alternativeName>
        <fullName>Probable DNA 3'-5' helicase RecG</fullName>
    </alternativeName>
</protein>
<keyword id="KW-0067">ATP-binding</keyword>
<keyword id="KW-0227">DNA damage</keyword>
<keyword id="KW-0233">DNA recombination</keyword>
<keyword id="KW-0234">DNA repair</keyword>
<keyword id="KW-0238">DNA-binding</keyword>
<keyword id="KW-0347">Helicase</keyword>
<keyword id="KW-0378">Hydrolase</keyword>
<keyword id="KW-0413">Isomerase</keyword>
<keyword id="KW-0547">Nucleotide-binding</keyword>
<keyword id="KW-1185">Reference proteome</keyword>
<proteinExistence type="inferred from homology"/>
<feature type="chain" id="PRO_0000102152" description="ATP-dependent DNA helicase RecG">
    <location>
        <begin position="1"/>
        <end position="686"/>
    </location>
</feature>
<feature type="domain" description="Helicase ATP-binding" evidence="3">
    <location>
        <begin position="279"/>
        <end position="439"/>
    </location>
</feature>
<feature type="domain" description="Helicase C-terminal" evidence="4">
    <location>
        <begin position="462"/>
        <end position="618"/>
    </location>
</feature>
<feature type="region of interest" description="Wedge domain" evidence="2">
    <location>
        <begin position="50"/>
        <end position="149"/>
    </location>
</feature>
<feature type="short sequence motif" description="DEAH box" evidence="3">
    <location>
        <begin position="392"/>
        <end position="395"/>
    </location>
</feature>
<feature type="binding site" evidence="3">
    <location>
        <begin position="292"/>
        <end position="299"/>
    </location>
    <ligand>
        <name>ATP</name>
        <dbReference type="ChEBI" id="CHEBI:30616"/>
    </ligand>
</feature>
<dbReference type="EC" id="5.6.2.4" evidence="1"/>
<dbReference type="EMBL" id="AB000439">
    <property type="protein sequence ID" value="BAA24572.1"/>
    <property type="molecule type" value="Genomic_DNA"/>
</dbReference>
<dbReference type="EMBL" id="CP000253">
    <property type="protein sequence ID" value="ABD30301.1"/>
    <property type="molecule type" value="Genomic_DNA"/>
</dbReference>
<dbReference type="RefSeq" id="WP_001151499.1">
    <property type="nucleotide sequence ID" value="NZ_LS483365.1"/>
</dbReference>
<dbReference type="RefSeq" id="YP_499733.1">
    <property type="nucleotide sequence ID" value="NC_007795.1"/>
</dbReference>
<dbReference type="SMR" id="O50581"/>
<dbReference type="STRING" id="93061.SAOUHSC_01194"/>
<dbReference type="PaxDb" id="1280-SAXN108_1227"/>
<dbReference type="GeneID" id="3919327"/>
<dbReference type="KEGG" id="sao:SAOUHSC_01194"/>
<dbReference type="PATRIC" id="fig|93061.5.peg.1097"/>
<dbReference type="eggNOG" id="COG1200">
    <property type="taxonomic scope" value="Bacteria"/>
</dbReference>
<dbReference type="HOGENOM" id="CLU_005122_7_1_9"/>
<dbReference type="OrthoDB" id="9804325at2"/>
<dbReference type="PRO" id="PR:O50581"/>
<dbReference type="Proteomes" id="UP000008816">
    <property type="component" value="Chromosome"/>
</dbReference>
<dbReference type="GO" id="GO:0005524">
    <property type="term" value="F:ATP binding"/>
    <property type="evidence" value="ECO:0007669"/>
    <property type="project" value="UniProtKB-KW"/>
</dbReference>
<dbReference type="GO" id="GO:0016887">
    <property type="term" value="F:ATP hydrolysis activity"/>
    <property type="evidence" value="ECO:0007669"/>
    <property type="project" value="RHEA"/>
</dbReference>
<dbReference type="GO" id="GO:0003677">
    <property type="term" value="F:DNA binding"/>
    <property type="evidence" value="ECO:0007669"/>
    <property type="project" value="UniProtKB-KW"/>
</dbReference>
<dbReference type="GO" id="GO:0003678">
    <property type="term" value="F:DNA helicase activity"/>
    <property type="evidence" value="ECO:0000318"/>
    <property type="project" value="GO_Central"/>
</dbReference>
<dbReference type="GO" id="GO:0006310">
    <property type="term" value="P:DNA recombination"/>
    <property type="evidence" value="ECO:0007669"/>
    <property type="project" value="UniProtKB-KW"/>
</dbReference>
<dbReference type="GO" id="GO:0006281">
    <property type="term" value="P:DNA repair"/>
    <property type="evidence" value="ECO:0000318"/>
    <property type="project" value="GO_Central"/>
</dbReference>
<dbReference type="CDD" id="cd17992">
    <property type="entry name" value="DEXHc_RecG"/>
    <property type="match status" value="1"/>
</dbReference>
<dbReference type="CDD" id="cd04488">
    <property type="entry name" value="RecG_wedge_OBF"/>
    <property type="match status" value="1"/>
</dbReference>
<dbReference type="Gene3D" id="2.40.50.140">
    <property type="entry name" value="Nucleic acid-binding proteins"/>
    <property type="match status" value="1"/>
</dbReference>
<dbReference type="Gene3D" id="3.40.50.300">
    <property type="entry name" value="P-loop containing nucleotide triphosphate hydrolases"/>
    <property type="match status" value="2"/>
</dbReference>
<dbReference type="InterPro" id="IPR004609">
    <property type="entry name" value="ATP-dep_DNA_helicase_RecG"/>
</dbReference>
<dbReference type="InterPro" id="IPR011545">
    <property type="entry name" value="DEAD/DEAH_box_helicase_dom"/>
</dbReference>
<dbReference type="InterPro" id="IPR014001">
    <property type="entry name" value="Helicase_ATP-bd"/>
</dbReference>
<dbReference type="InterPro" id="IPR001650">
    <property type="entry name" value="Helicase_C-like"/>
</dbReference>
<dbReference type="InterPro" id="IPR012340">
    <property type="entry name" value="NA-bd_OB-fold"/>
</dbReference>
<dbReference type="InterPro" id="IPR027417">
    <property type="entry name" value="P-loop_NTPase"/>
</dbReference>
<dbReference type="InterPro" id="IPR047112">
    <property type="entry name" value="RecG/Mfd"/>
</dbReference>
<dbReference type="InterPro" id="IPR045562">
    <property type="entry name" value="RecG_dom3_C"/>
</dbReference>
<dbReference type="InterPro" id="IPR033454">
    <property type="entry name" value="RecG_wedge"/>
</dbReference>
<dbReference type="NCBIfam" id="NF008165">
    <property type="entry name" value="PRK10917.1-3"/>
    <property type="match status" value="1"/>
</dbReference>
<dbReference type="NCBIfam" id="NF008168">
    <property type="entry name" value="PRK10917.2-2"/>
    <property type="match status" value="1"/>
</dbReference>
<dbReference type="NCBIfam" id="TIGR00643">
    <property type="entry name" value="recG"/>
    <property type="match status" value="1"/>
</dbReference>
<dbReference type="PANTHER" id="PTHR47964">
    <property type="entry name" value="ATP-DEPENDENT DNA HELICASE HOMOLOG RECG, CHLOROPLASTIC"/>
    <property type="match status" value="1"/>
</dbReference>
<dbReference type="PANTHER" id="PTHR47964:SF1">
    <property type="entry name" value="ATP-DEPENDENT DNA HELICASE HOMOLOG RECG, CHLOROPLASTIC"/>
    <property type="match status" value="1"/>
</dbReference>
<dbReference type="Pfam" id="PF00270">
    <property type="entry name" value="DEAD"/>
    <property type="match status" value="1"/>
</dbReference>
<dbReference type="Pfam" id="PF00271">
    <property type="entry name" value="Helicase_C"/>
    <property type="match status" value="1"/>
</dbReference>
<dbReference type="Pfam" id="PF19833">
    <property type="entry name" value="RecG_dom3_C"/>
    <property type="match status" value="1"/>
</dbReference>
<dbReference type="Pfam" id="PF17191">
    <property type="entry name" value="RecG_wedge"/>
    <property type="match status" value="1"/>
</dbReference>
<dbReference type="SMART" id="SM00487">
    <property type="entry name" value="DEXDc"/>
    <property type="match status" value="1"/>
</dbReference>
<dbReference type="SMART" id="SM00490">
    <property type="entry name" value="HELICc"/>
    <property type="match status" value="1"/>
</dbReference>
<dbReference type="SUPFAM" id="SSF50249">
    <property type="entry name" value="Nucleic acid-binding proteins"/>
    <property type="match status" value="1"/>
</dbReference>
<dbReference type="SUPFAM" id="SSF52540">
    <property type="entry name" value="P-loop containing nucleoside triphosphate hydrolases"/>
    <property type="match status" value="2"/>
</dbReference>
<dbReference type="PROSITE" id="PS51192">
    <property type="entry name" value="HELICASE_ATP_BIND_1"/>
    <property type="match status" value="1"/>
</dbReference>
<dbReference type="PROSITE" id="PS51194">
    <property type="entry name" value="HELICASE_CTER"/>
    <property type="match status" value="1"/>
</dbReference>
<name>RECG_STAA8</name>
<comment type="function">
    <text evidence="1">Plays a critical role in recombination and DNA repair. Helps process Holliday junction intermediates to mature products by catalyzing branch migration. Has replication fork regression activity, unwinds stalled or blocked replication forks to make a HJ that can be resolved. Has a DNA unwinding activity characteristic of a DNA helicase with 3'-5' polarity (By similarity).</text>
</comment>
<comment type="catalytic activity">
    <reaction evidence="1">
        <text>Couples ATP hydrolysis with the unwinding of duplex DNA by translocating in the 3'-5' direction.</text>
        <dbReference type="EC" id="5.6.2.4"/>
    </reaction>
</comment>
<comment type="catalytic activity">
    <reaction evidence="1">
        <text>ATP + H2O = ADP + phosphate + H(+)</text>
        <dbReference type="Rhea" id="RHEA:13065"/>
        <dbReference type="ChEBI" id="CHEBI:15377"/>
        <dbReference type="ChEBI" id="CHEBI:15378"/>
        <dbReference type="ChEBI" id="CHEBI:30616"/>
        <dbReference type="ChEBI" id="CHEBI:43474"/>
        <dbReference type="ChEBI" id="CHEBI:456216"/>
        <dbReference type="EC" id="5.6.2.4"/>
    </reaction>
</comment>
<comment type="subunit">
    <text evidence="2">Monomer (By similarity).</text>
</comment>
<comment type="domain">
    <text evidence="2">The wedge domain within the N-terminus inserts into the replication fork junction, where the lagging and leading strand split (By similarity).</text>
</comment>
<comment type="disruption phenotype">
    <text evidence="5">Increased sensitivity to ciproxoflacin (PubMed:9257758).</text>
</comment>
<comment type="similarity">
    <text evidence="7">Belongs to the helicase family. RecG subfamily.</text>
</comment>
<accession>O50581</accession>
<accession>Q2FZ57</accession>